<evidence type="ECO:0000255" key="1">
    <source>
        <dbReference type="HAMAP-Rule" id="MF_00214"/>
    </source>
</evidence>
<accession>Q2FIJ1</accession>
<name>AROD_STAA3</name>
<gene>
    <name evidence="1" type="primary">aroD</name>
    <name type="ordered locus">SAUSA300_0787</name>
</gene>
<comment type="function">
    <text evidence="1">Involved in the third step of the chorismate pathway, which leads to the biosynthesis of aromatic amino acids. Catalyzes the cis-dehydration of 3-dehydroquinate (DHQ) and introduces the first double bond of the aromatic ring to yield 3-dehydroshikimate.</text>
</comment>
<comment type="catalytic activity">
    <reaction evidence="1">
        <text>3-dehydroquinate = 3-dehydroshikimate + H2O</text>
        <dbReference type="Rhea" id="RHEA:21096"/>
        <dbReference type="ChEBI" id="CHEBI:15377"/>
        <dbReference type="ChEBI" id="CHEBI:16630"/>
        <dbReference type="ChEBI" id="CHEBI:32364"/>
        <dbReference type="EC" id="4.2.1.10"/>
    </reaction>
</comment>
<comment type="pathway">
    <text evidence="1">Metabolic intermediate biosynthesis; chorismate biosynthesis; chorismate from D-erythrose 4-phosphate and phosphoenolpyruvate: step 3/7.</text>
</comment>
<comment type="subunit">
    <text evidence="1">Homodimer.</text>
</comment>
<comment type="similarity">
    <text evidence="1">Belongs to the type-I 3-dehydroquinase family.</text>
</comment>
<organism>
    <name type="scientific">Staphylococcus aureus (strain USA300)</name>
    <dbReference type="NCBI Taxonomy" id="367830"/>
    <lineage>
        <taxon>Bacteria</taxon>
        <taxon>Bacillati</taxon>
        <taxon>Bacillota</taxon>
        <taxon>Bacilli</taxon>
        <taxon>Bacillales</taxon>
        <taxon>Staphylococcaceae</taxon>
        <taxon>Staphylococcus</taxon>
    </lineage>
</organism>
<sequence>MTHVEVVATIAPQLSIEETLIQKINHRIDAIDVLELRIDQIENVTVDQVAEMITKLKVMQDSFKLLVTYRTKLQGGYGQFTNDSYLNLISDLANINGIDMIDIEWQADIDIEKHQRIITHLQQYNKEVVISHHNFESTPPLDELQFIFFKMQKFNPEYVKLAVMPHNKNDVLNLLQAMSTFSDTMDCKVVGISMSKLGLISRTAQGVFGGALTYGCIGVPQAPGQIDVTDLKAQVTLY</sequence>
<proteinExistence type="inferred from homology"/>
<keyword id="KW-0028">Amino-acid biosynthesis</keyword>
<keyword id="KW-0057">Aromatic amino acid biosynthesis</keyword>
<keyword id="KW-0456">Lyase</keyword>
<keyword id="KW-0704">Schiff base</keyword>
<reference key="1">
    <citation type="journal article" date="2006" name="Lancet">
        <title>Complete genome sequence of USA300, an epidemic clone of community-acquired meticillin-resistant Staphylococcus aureus.</title>
        <authorList>
            <person name="Diep B.A."/>
            <person name="Gill S.R."/>
            <person name="Chang R.F."/>
            <person name="Phan T.H."/>
            <person name="Chen J.H."/>
            <person name="Davidson M.G."/>
            <person name="Lin F."/>
            <person name="Lin J."/>
            <person name="Carleton H.A."/>
            <person name="Mongodin E.F."/>
            <person name="Sensabaugh G.F."/>
            <person name="Perdreau-Remington F."/>
        </authorList>
    </citation>
    <scope>NUCLEOTIDE SEQUENCE [LARGE SCALE GENOMIC DNA]</scope>
    <source>
        <strain>USA300</strain>
    </source>
</reference>
<protein>
    <recommendedName>
        <fullName evidence="1">3-dehydroquinate dehydratase</fullName>
        <shortName evidence="1">3-dehydroquinase</shortName>
        <ecNumber evidence="1">4.2.1.10</ecNumber>
    </recommendedName>
    <alternativeName>
        <fullName evidence="1">Type I DHQase</fullName>
    </alternativeName>
    <alternativeName>
        <fullName evidence="1">Type I dehydroquinase</fullName>
        <shortName evidence="1">DHQ1</shortName>
    </alternativeName>
</protein>
<dbReference type="EC" id="4.2.1.10" evidence="1"/>
<dbReference type="EMBL" id="CP000255">
    <property type="protein sequence ID" value="ABD21288.1"/>
    <property type="molecule type" value="Genomic_DNA"/>
</dbReference>
<dbReference type="RefSeq" id="WP_000150017.1">
    <property type="nucleotide sequence ID" value="NZ_CP027476.1"/>
</dbReference>
<dbReference type="SMR" id="Q2FIJ1"/>
<dbReference type="KEGG" id="saa:SAUSA300_0787"/>
<dbReference type="HOGENOM" id="CLU_064444_2_1_9"/>
<dbReference type="OMA" id="DIVEWRV"/>
<dbReference type="UniPathway" id="UPA00053">
    <property type="reaction ID" value="UER00086"/>
</dbReference>
<dbReference type="Proteomes" id="UP000001939">
    <property type="component" value="Chromosome"/>
</dbReference>
<dbReference type="GO" id="GO:0003855">
    <property type="term" value="F:3-dehydroquinate dehydratase activity"/>
    <property type="evidence" value="ECO:0007669"/>
    <property type="project" value="UniProtKB-UniRule"/>
</dbReference>
<dbReference type="GO" id="GO:0046279">
    <property type="term" value="P:3,4-dihydroxybenzoate biosynthetic process"/>
    <property type="evidence" value="ECO:0007669"/>
    <property type="project" value="UniProtKB-ARBA"/>
</dbReference>
<dbReference type="GO" id="GO:0008652">
    <property type="term" value="P:amino acid biosynthetic process"/>
    <property type="evidence" value="ECO:0007669"/>
    <property type="project" value="UniProtKB-KW"/>
</dbReference>
<dbReference type="GO" id="GO:0009073">
    <property type="term" value="P:aromatic amino acid family biosynthetic process"/>
    <property type="evidence" value="ECO:0007669"/>
    <property type="project" value="UniProtKB-KW"/>
</dbReference>
<dbReference type="GO" id="GO:0009423">
    <property type="term" value="P:chorismate biosynthetic process"/>
    <property type="evidence" value="ECO:0007669"/>
    <property type="project" value="UniProtKB-UniRule"/>
</dbReference>
<dbReference type="CDD" id="cd00502">
    <property type="entry name" value="DHQase_I"/>
    <property type="match status" value="1"/>
</dbReference>
<dbReference type="FunFam" id="3.20.20.70:FF:000216">
    <property type="entry name" value="3-dehydroquinate dehydratase"/>
    <property type="match status" value="1"/>
</dbReference>
<dbReference type="Gene3D" id="3.20.20.70">
    <property type="entry name" value="Aldolase class I"/>
    <property type="match status" value="1"/>
</dbReference>
<dbReference type="HAMAP" id="MF_00214">
    <property type="entry name" value="AroD"/>
    <property type="match status" value="1"/>
</dbReference>
<dbReference type="InterPro" id="IPR013785">
    <property type="entry name" value="Aldolase_TIM"/>
</dbReference>
<dbReference type="InterPro" id="IPR001381">
    <property type="entry name" value="DHquinase_I"/>
</dbReference>
<dbReference type="InterPro" id="IPR050146">
    <property type="entry name" value="Type-I_3-dehydroquinase"/>
</dbReference>
<dbReference type="NCBIfam" id="TIGR01093">
    <property type="entry name" value="aroD"/>
    <property type="match status" value="1"/>
</dbReference>
<dbReference type="PANTHER" id="PTHR43699">
    <property type="entry name" value="3-DEHYDROQUINATE DEHYDRATASE"/>
    <property type="match status" value="1"/>
</dbReference>
<dbReference type="PANTHER" id="PTHR43699:SF1">
    <property type="entry name" value="3-DEHYDROQUINATE DEHYDRATASE"/>
    <property type="match status" value="1"/>
</dbReference>
<dbReference type="Pfam" id="PF01487">
    <property type="entry name" value="DHquinase_I"/>
    <property type="match status" value="1"/>
</dbReference>
<dbReference type="SUPFAM" id="SSF51569">
    <property type="entry name" value="Aldolase"/>
    <property type="match status" value="1"/>
</dbReference>
<feature type="chain" id="PRO_1000043186" description="3-dehydroquinate dehydratase">
    <location>
        <begin position="1"/>
        <end position="238"/>
    </location>
</feature>
<feature type="active site" description="Proton donor/acceptor" evidence="1">
    <location>
        <position position="133"/>
    </location>
</feature>
<feature type="active site" description="Schiff-base intermediate with substrate" evidence="1">
    <location>
        <position position="160"/>
    </location>
</feature>
<feature type="binding site" evidence="1">
    <location>
        <begin position="35"/>
        <end position="37"/>
    </location>
    <ligand>
        <name>3-dehydroquinate</name>
        <dbReference type="ChEBI" id="CHEBI:32364"/>
    </ligand>
</feature>
<feature type="binding site" evidence="1">
    <location>
        <position position="70"/>
    </location>
    <ligand>
        <name>3-dehydroquinate</name>
        <dbReference type="ChEBI" id="CHEBI:32364"/>
    </ligand>
</feature>
<feature type="binding site" evidence="1">
    <location>
        <position position="202"/>
    </location>
    <ligand>
        <name>3-dehydroquinate</name>
        <dbReference type="ChEBI" id="CHEBI:32364"/>
    </ligand>
</feature>
<feature type="binding site" evidence="1">
    <location>
        <position position="225"/>
    </location>
    <ligand>
        <name>3-dehydroquinate</name>
        <dbReference type="ChEBI" id="CHEBI:32364"/>
    </ligand>
</feature>